<name>OMPA_BORAV</name>
<organism>
    <name type="scientific">Bordetella avium</name>
    <dbReference type="NCBI Taxonomy" id="521"/>
    <lineage>
        <taxon>Bacteria</taxon>
        <taxon>Pseudomonadati</taxon>
        <taxon>Pseudomonadota</taxon>
        <taxon>Betaproteobacteria</taxon>
        <taxon>Burkholderiales</taxon>
        <taxon>Alcaligenaceae</taxon>
        <taxon>Bordetella</taxon>
    </lineage>
</organism>
<comment type="function">
    <text evidence="1">Structural protein that may protect the integrity of the bacterium.</text>
</comment>
<comment type="subcellular location">
    <subcellularLocation>
        <location evidence="6">Cell outer membrane</location>
        <topology>Multi-pass membrane protein</topology>
    </subcellularLocation>
</comment>
<comment type="similarity">
    <text evidence="5">Belongs to the outer membrane OOP (TC 1.B.6) superfamily.</text>
</comment>
<accession>Q05146</accession>
<dbReference type="EMBL" id="M96550">
    <property type="protein sequence ID" value="AAA22979.1"/>
    <property type="molecule type" value="Genomic_DNA"/>
</dbReference>
<dbReference type="PIR" id="A45275">
    <property type="entry name" value="A45275"/>
</dbReference>
<dbReference type="RefSeq" id="WP_012417027.1">
    <property type="nucleotide sequence ID" value="NZ_UFTG01000001.1"/>
</dbReference>
<dbReference type="SMR" id="Q05146"/>
<dbReference type="GeneID" id="92935528"/>
<dbReference type="OMA" id="CWRTGYW"/>
<dbReference type="GO" id="GO:0009279">
    <property type="term" value="C:cell outer membrane"/>
    <property type="evidence" value="ECO:0007669"/>
    <property type="project" value="UniProtKB-SubCell"/>
</dbReference>
<dbReference type="GO" id="GO:0046930">
    <property type="term" value="C:pore complex"/>
    <property type="evidence" value="ECO:0007669"/>
    <property type="project" value="UniProtKB-KW"/>
</dbReference>
<dbReference type="GO" id="GO:0015288">
    <property type="term" value="F:porin activity"/>
    <property type="evidence" value="ECO:0007669"/>
    <property type="project" value="UniProtKB-KW"/>
</dbReference>
<dbReference type="GO" id="GO:0006811">
    <property type="term" value="P:monoatomic ion transport"/>
    <property type="evidence" value="ECO:0007669"/>
    <property type="project" value="UniProtKB-KW"/>
</dbReference>
<dbReference type="CDD" id="cd07185">
    <property type="entry name" value="OmpA_C-like"/>
    <property type="match status" value="1"/>
</dbReference>
<dbReference type="Gene3D" id="3.30.1330.60">
    <property type="entry name" value="OmpA-like domain"/>
    <property type="match status" value="1"/>
</dbReference>
<dbReference type="InterPro" id="IPR050330">
    <property type="entry name" value="Bact_OuterMem_StrucFunc"/>
</dbReference>
<dbReference type="InterPro" id="IPR006664">
    <property type="entry name" value="OMP_bac"/>
</dbReference>
<dbReference type="InterPro" id="IPR006665">
    <property type="entry name" value="OmpA-like"/>
</dbReference>
<dbReference type="InterPro" id="IPR006690">
    <property type="entry name" value="OMPA-like_CS"/>
</dbReference>
<dbReference type="InterPro" id="IPR036737">
    <property type="entry name" value="OmpA-like_sf"/>
</dbReference>
<dbReference type="NCBIfam" id="NF045787">
    <property type="entry name" value="OmpABordt"/>
    <property type="match status" value="1"/>
</dbReference>
<dbReference type="PANTHER" id="PTHR30329:SF21">
    <property type="entry name" value="LIPOPROTEIN YIAD-RELATED"/>
    <property type="match status" value="1"/>
</dbReference>
<dbReference type="PANTHER" id="PTHR30329">
    <property type="entry name" value="STATOR ELEMENT OF FLAGELLAR MOTOR COMPLEX"/>
    <property type="match status" value="1"/>
</dbReference>
<dbReference type="Pfam" id="PF00691">
    <property type="entry name" value="OmpA"/>
    <property type="match status" value="1"/>
</dbReference>
<dbReference type="PRINTS" id="PR01023">
    <property type="entry name" value="NAFLGMOTY"/>
</dbReference>
<dbReference type="PRINTS" id="PR01021">
    <property type="entry name" value="OMPADOMAIN"/>
</dbReference>
<dbReference type="SUPFAM" id="SSF103088">
    <property type="entry name" value="OmpA-like"/>
    <property type="match status" value="1"/>
</dbReference>
<dbReference type="PROSITE" id="PS01068">
    <property type="entry name" value="OMPA_1"/>
    <property type="match status" value="1"/>
</dbReference>
<dbReference type="PROSITE" id="PS51123">
    <property type="entry name" value="OMPA_2"/>
    <property type="match status" value="1"/>
</dbReference>
<keyword id="KW-0998">Cell outer membrane</keyword>
<keyword id="KW-0406">Ion transport</keyword>
<keyword id="KW-0472">Membrane</keyword>
<keyword id="KW-0626">Porin</keyword>
<keyword id="KW-0732">Signal</keyword>
<keyword id="KW-0812">Transmembrane</keyword>
<keyword id="KW-1134">Transmembrane beta strand</keyword>
<keyword id="KW-0813">Transport</keyword>
<proteinExistence type="inferred from homology"/>
<gene>
    <name evidence="4" type="primary">ompA</name>
</gene>
<reference key="1">
    <citation type="journal article" date="1992" name="J. Bacteriol.">
        <title>Cloning and sequencing of a gene encoding a 21-kilodalton outer membrane protein from Bordetella avium and expression of the gene in Salmonella typhimurium.</title>
        <authorList>
            <person name="Gentry-Weeks C.R."/>
            <person name="Hultsch A.-L."/>
            <person name="Kelly S.M."/>
            <person name="Keith J.M."/>
            <person name="Curtiss R. III"/>
        </authorList>
    </citation>
    <scope>NUCLEOTIDE SEQUENCE [GENOMIC DNA]</scope>
    <scope>SUBCELLULAR LOCATION</scope>
    <source>
        <strain>197</strain>
    </source>
</reference>
<feature type="signal peptide" evidence="2">
    <location>
        <begin position="1"/>
        <end position="24"/>
    </location>
</feature>
<feature type="chain" id="PRO_0000020104" description="Outer membrane protein A">
    <location>
        <begin position="25"/>
        <end position="194"/>
    </location>
</feature>
<feature type="transmembrane region" description="Beta stranded" evidence="1">
    <location>
        <begin position="30"/>
        <end position="38"/>
    </location>
</feature>
<feature type="domain" description="OmpA-like" evidence="3">
    <location>
        <begin position="77"/>
        <end position="193"/>
    </location>
</feature>
<sequence length="194" mass="21115">MNKPSKFALALAFAAVTASGVASAQTVDNWRNPYGNVWKNGTNELCWRDAFWTPATGIPGCDGVPVAQQPKEKPAPMAAKVVFNADTFFDFDKSTLKPEGRQLLDQVAQQARAIDLETIIAVGNTDSIGTEAYNMKLSERRAASVKAYLVSKGIDPNRIYTEGKGKLNPIASNKTAEGRARNRRVEIEIVGSRK</sequence>
<protein>
    <recommendedName>
        <fullName evidence="4">Outer membrane protein A</fullName>
    </recommendedName>
</protein>
<evidence type="ECO:0000250" key="1">
    <source>
        <dbReference type="UniProtKB" id="P0A910"/>
    </source>
</evidence>
<evidence type="ECO:0000255" key="2"/>
<evidence type="ECO:0000255" key="3">
    <source>
        <dbReference type="PROSITE-ProRule" id="PRU00473"/>
    </source>
</evidence>
<evidence type="ECO:0000303" key="4">
    <source>
    </source>
</evidence>
<evidence type="ECO:0000305" key="5"/>
<evidence type="ECO:0000305" key="6">
    <source>
    </source>
</evidence>